<feature type="chain" id="PRO_0000130579" description="Protein translation factor SUI1 homolog">
    <location>
        <begin position="1"/>
        <end position="102"/>
    </location>
</feature>
<dbReference type="EMBL" id="AE010299">
    <property type="protein sequence ID" value="AAM07407.1"/>
    <property type="molecule type" value="Genomic_DNA"/>
</dbReference>
<dbReference type="RefSeq" id="WP_011023951.1">
    <property type="nucleotide sequence ID" value="NC_003552.1"/>
</dbReference>
<dbReference type="SMR" id="Q8TIT3"/>
<dbReference type="FunCoup" id="Q8TIT3">
    <property type="interactions" value="85"/>
</dbReference>
<dbReference type="STRING" id="188937.MA_4059"/>
<dbReference type="EnsemblBacteria" id="AAM07407">
    <property type="protein sequence ID" value="AAM07407"/>
    <property type="gene ID" value="MA_4059"/>
</dbReference>
<dbReference type="GeneID" id="53687750"/>
<dbReference type="KEGG" id="mac:MA_4059"/>
<dbReference type="HOGENOM" id="CLU_082805_6_1_2"/>
<dbReference type="InParanoid" id="Q8TIT3"/>
<dbReference type="OrthoDB" id="11182at2157"/>
<dbReference type="PhylomeDB" id="Q8TIT3"/>
<dbReference type="Proteomes" id="UP000002487">
    <property type="component" value="Chromosome"/>
</dbReference>
<dbReference type="GO" id="GO:0003743">
    <property type="term" value="F:translation initiation factor activity"/>
    <property type="evidence" value="ECO:0007669"/>
    <property type="project" value="InterPro"/>
</dbReference>
<dbReference type="GO" id="GO:0001731">
    <property type="term" value="P:formation of translation preinitiation complex"/>
    <property type="evidence" value="ECO:0000318"/>
    <property type="project" value="GO_Central"/>
</dbReference>
<dbReference type="GO" id="GO:0006417">
    <property type="term" value="P:regulation of translation"/>
    <property type="evidence" value="ECO:0007669"/>
    <property type="project" value="UniProtKB-UniRule"/>
</dbReference>
<dbReference type="GO" id="GO:0002188">
    <property type="term" value="P:translation reinitiation"/>
    <property type="evidence" value="ECO:0000318"/>
    <property type="project" value="GO_Central"/>
</dbReference>
<dbReference type="CDD" id="cd11567">
    <property type="entry name" value="YciH_like"/>
    <property type="match status" value="1"/>
</dbReference>
<dbReference type="FunFam" id="3.30.780.10:FF:000006">
    <property type="entry name" value="Protein translation factor SUI1 homolog"/>
    <property type="match status" value="1"/>
</dbReference>
<dbReference type="Gene3D" id="3.30.780.10">
    <property type="entry name" value="SUI1-like domain"/>
    <property type="match status" value="1"/>
</dbReference>
<dbReference type="HAMAP" id="MF_00604">
    <property type="entry name" value="SUI1"/>
    <property type="match status" value="1"/>
</dbReference>
<dbReference type="InterPro" id="IPR050318">
    <property type="entry name" value="DENR/SUI1_TIF"/>
</dbReference>
<dbReference type="InterPro" id="IPR001950">
    <property type="entry name" value="SUI1"/>
</dbReference>
<dbReference type="InterPro" id="IPR022851">
    <property type="entry name" value="SUI1_arc"/>
</dbReference>
<dbReference type="InterPro" id="IPR005872">
    <property type="entry name" value="SUI1_arc_bac"/>
</dbReference>
<dbReference type="InterPro" id="IPR036877">
    <property type="entry name" value="SUI1_dom_sf"/>
</dbReference>
<dbReference type="NCBIfam" id="NF002096">
    <property type="entry name" value="PRK00939.1"/>
    <property type="match status" value="1"/>
</dbReference>
<dbReference type="NCBIfam" id="TIGR01158">
    <property type="entry name" value="SUI1_rel"/>
    <property type="match status" value="1"/>
</dbReference>
<dbReference type="PANTHER" id="PTHR12789:SF0">
    <property type="entry name" value="DENSITY-REGULATED PROTEIN"/>
    <property type="match status" value="1"/>
</dbReference>
<dbReference type="PANTHER" id="PTHR12789">
    <property type="entry name" value="DENSITY-REGULATED PROTEIN HOMOLOG"/>
    <property type="match status" value="1"/>
</dbReference>
<dbReference type="Pfam" id="PF01253">
    <property type="entry name" value="SUI1"/>
    <property type="match status" value="1"/>
</dbReference>
<dbReference type="PIRSF" id="PIRSF037511">
    <property type="entry name" value="Transl_init_SUI1_pro"/>
    <property type="match status" value="1"/>
</dbReference>
<dbReference type="SUPFAM" id="SSF55159">
    <property type="entry name" value="eIF1-like"/>
    <property type="match status" value="1"/>
</dbReference>
<dbReference type="PROSITE" id="PS50296">
    <property type="entry name" value="SUI1"/>
    <property type="match status" value="1"/>
</dbReference>
<reference key="1">
    <citation type="journal article" date="2002" name="Genome Res.">
        <title>The genome of Methanosarcina acetivorans reveals extensive metabolic and physiological diversity.</title>
        <authorList>
            <person name="Galagan J.E."/>
            <person name="Nusbaum C."/>
            <person name="Roy A."/>
            <person name="Endrizzi M.G."/>
            <person name="Macdonald P."/>
            <person name="FitzHugh W."/>
            <person name="Calvo S."/>
            <person name="Engels R."/>
            <person name="Smirnov S."/>
            <person name="Atnoor D."/>
            <person name="Brown A."/>
            <person name="Allen N."/>
            <person name="Naylor J."/>
            <person name="Stange-Thomann N."/>
            <person name="DeArellano K."/>
            <person name="Johnson R."/>
            <person name="Linton L."/>
            <person name="McEwan P."/>
            <person name="McKernan K."/>
            <person name="Talamas J."/>
            <person name="Tirrell A."/>
            <person name="Ye W."/>
            <person name="Zimmer A."/>
            <person name="Barber R.D."/>
            <person name="Cann I."/>
            <person name="Graham D.E."/>
            <person name="Grahame D.A."/>
            <person name="Guss A.M."/>
            <person name="Hedderich R."/>
            <person name="Ingram-Smith C."/>
            <person name="Kuettner H.C."/>
            <person name="Krzycki J.A."/>
            <person name="Leigh J.A."/>
            <person name="Li W."/>
            <person name="Liu J."/>
            <person name="Mukhopadhyay B."/>
            <person name="Reeve J.N."/>
            <person name="Smith K."/>
            <person name="Springer T.A."/>
            <person name="Umayam L.A."/>
            <person name="White O."/>
            <person name="White R.H."/>
            <person name="de Macario E.C."/>
            <person name="Ferry J.G."/>
            <person name="Jarrell K.F."/>
            <person name="Jing H."/>
            <person name="Macario A.J.L."/>
            <person name="Paulsen I.T."/>
            <person name="Pritchett M."/>
            <person name="Sowers K.R."/>
            <person name="Swanson R.V."/>
            <person name="Zinder S.H."/>
            <person name="Lander E."/>
            <person name="Metcalf W.W."/>
            <person name="Birren B."/>
        </authorList>
    </citation>
    <scope>NUCLEOTIDE SEQUENCE [LARGE SCALE GENOMIC DNA]</scope>
    <source>
        <strain>ATCC 35395 / DSM 2834 / JCM 12185 / C2A</strain>
    </source>
</reference>
<name>SUI1_METAC</name>
<evidence type="ECO:0000255" key="1">
    <source>
        <dbReference type="HAMAP-Rule" id="MF_00604"/>
    </source>
</evidence>
<proteinExistence type="inferred from homology"/>
<sequence>MSSGMCPVCGLPKELCICEEVAKEQQRITVKVNRRRYGKEVTVVEGFDASEIDLHELSTYLKSKFACGGTVKGNTVELQGNHLARMKEVLMEKGFSAEQIKN</sequence>
<comment type="similarity">
    <text evidence="1">Belongs to the SUI1 family.</text>
</comment>
<accession>Q8TIT3</accession>
<gene>
    <name type="ordered locus">MA_4059</name>
</gene>
<keyword id="KW-0648">Protein biosynthesis</keyword>
<keyword id="KW-1185">Reference proteome</keyword>
<keyword id="KW-0810">Translation regulation</keyword>
<organism>
    <name type="scientific">Methanosarcina acetivorans (strain ATCC 35395 / DSM 2834 / JCM 12185 / C2A)</name>
    <dbReference type="NCBI Taxonomy" id="188937"/>
    <lineage>
        <taxon>Archaea</taxon>
        <taxon>Methanobacteriati</taxon>
        <taxon>Methanobacteriota</taxon>
        <taxon>Stenosarchaea group</taxon>
        <taxon>Methanomicrobia</taxon>
        <taxon>Methanosarcinales</taxon>
        <taxon>Methanosarcinaceae</taxon>
        <taxon>Methanosarcina</taxon>
    </lineage>
</organism>
<protein>
    <recommendedName>
        <fullName evidence="1">Protein translation factor SUI1 homolog</fullName>
    </recommendedName>
</protein>